<proteinExistence type="predicted"/>
<dbReference type="PIR" id="JE0036">
    <property type="entry name" value="JE0036"/>
</dbReference>
<dbReference type="STRING" id="585034.ECIAI1_0779"/>
<dbReference type="MEROPS" id="X19.003"/>
<dbReference type="InterPro" id="IPR010438">
    <property type="entry name" value="Lambda_Bor"/>
</dbReference>
<dbReference type="Pfam" id="PF06291">
    <property type="entry name" value="Lambda_Bor"/>
    <property type="match status" value="1"/>
</dbReference>
<dbReference type="PROSITE" id="PS51257">
    <property type="entry name" value="PROKAR_LIPOPROTEIN"/>
    <property type="match status" value="1"/>
</dbReference>
<sequence>MQDNKMKKMLFSAALAMLITGCAQQTFTVGNKPTAVTPKETITHHFFVSPIGQRKLLMQPKFVGGAENVVKTETQQTFVNALPGFITFGIYTPRETRVYCSQ</sequence>
<comment type="function">
    <text>Increases serum survival and confers group II surface exclusion.</text>
</comment>
<accession>P19592</accession>
<protein>
    <recommendedName>
        <fullName>Protein iss</fullName>
    </recommendedName>
</protein>
<name>ISS_ECOLX</name>
<reference key="1">
    <citation type="journal article" date="1989" name="Mol. Gen. Genet.">
        <title>Cloning and DNA sequence of plasmid determinant iss, coding for increased serum survival and surface exclusion, which has homology with lambda DNA.</title>
        <authorList>
            <person name="Chuba P.J."/>
            <person name="Leon M.A."/>
            <person name="Banerjee A."/>
            <person name="Palchaudhuri S."/>
        </authorList>
    </citation>
    <scope>NUCLEOTIDE SEQUENCE [GENOMIC DNA]</scope>
</reference>
<feature type="chain" id="PRO_0000068362" description="Protein iss">
    <location>
        <begin position="1"/>
        <end position="102"/>
    </location>
</feature>
<geneLocation type="plasmid">
    <name>IncFI ColV2-K94</name>
</geneLocation>
<keyword id="KW-0614">Plasmid</keyword>
<gene>
    <name type="primary">iss</name>
</gene>
<organism>
    <name type="scientific">Escherichia coli</name>
    <dbReference type="NCBI Taxonomy" id="562"/>
    <lineage>
        <taxon>Bacteria</taxon>
        <taxon>Pseudomonadati</taxon>
        <taxon>Pseudomonadota</taxon>
        <taxon>Gammaproteobacteria</taxon>
        <taxon>Enterobacterales</taxon>
        <taxon>Enterobacteriaceae</taxon>
        <taxon>Escherichia</taxon>
    </lineage>
</organism>